<proteinExistence type="inferred from homology"/>
<reference evidence="4" key="1">
    <citation type="submission" date="2003-08" db="EMBL/GenBank/DDBJ databases">
        <title>Identification of new putative rat taste receptors belonging to the T2R family.</title>
        <authorList>
            <person name="Conte C."/>
            <person name="Ebeling M."/>
            <person name="Marcuz A."/>
            <person name="Andres-Barquin P.J."/>
        </authorList>
    </citation>
    <scope>NUCLEOTIDE SEQUENCE [GENOMIC DNA]</scope>
    <source>
        <strain evidence="4">Sprague-Dawley</strain>
    </source>
</reference>
<dbReference type="EMBL" id="AY362748">
    <property type="protein sequence ID" value="AAR13357.1"/>
    <property type="molecule type" value="Genomic_DNA"/>
</dbReference>
<dbReference type="RefSeq" id="NP_001020233.1">
    <property type="nucleotide sequence ID" value="NM_001025062.1"/>
</dbReference>
<dbReference type="SMR" id="Q67ES2"/>
<dbReference type="FunCoup" id="Q67ES2">
    <property type="interactions" value="89"/>
</dbReference>
<dbReference type="STRING" id="10116.ENSRNOP00000030941"/>
<dbReference type="GlyCosmos" id="Q67ES2">
    <property type="glycosylation" value="1 site, No reported glycans"/>
</dbReference>
<dbReference type="GlyGen" id="Q67ES2">
    <property type="glycosylation" value="1 site"/>
</dbReference>
<dbReference type="iPTMnet" id="Q67ES2"/>
<dbReference type="PhosphoSitePlus" id="Q67ES2"/>
<dbReference type="PaxDb" id="10116-ENSRNOP00000030941"/>
<dbReference type="GeneID" id="502757"/>
<dbReference type="KEGG" id="rno:502757"/>
<dbReference type="UCSC" id="RGD:1561078">
    <property type="organism name" value="rat"/>
</dbReference>
<dbReference type="AGR" id="RGD:1561078"/>
<dbReference type="CTD" id="387512"/>
<dbReference type="RGD" id="1561078">
    <property type="gene designation" value="Tas2r135"/>
</dbReference>
<dbReference type="eggNOG" id="ENOG502S2SI">
    <property type="taxonomic scope" value="Eukaryota"/>
</dbReference>
<dbReference type="InParanoid" id="Q67ES2"/>
<dbReference type="OrthoDB" id="9836876at2759"/>
<dbReference type="PhylomeDB" id="Q67ES2"/>
<dbReference type="Reactome" id="R-RNO-418594">
    <property type="pathway name" value="G alpha (i) signalling events"/>
</dbReference>
<dbReference type="Reactome" id="R-RNO-420499">
    <property type="pathway name" value="Class C/3 (Metabotropic glutamate/pheromone receptors)"/>
</dbReference>
<dbReference type="PRO" id="PR:Q67ES2"/>
<dbReference type="Proteomes" id="UP000002494">
    <property type="component" value="Unplaced"/>
</dbReference>
<dbReference type="GO" id="GO:0016020">
    <property type="term" value="C:membrane"/>
    <property type="evidence" value="ECO:0000266"/>
    <property type="project" value="RGD"/>
</dbReference>
<dbReference type="GO" id="GO:0004930">
    <property type="term" value="F:G protein-coupled receptor activity"/>
    <property type="evidence" value="ECO:0007669"/>
    <property type="project" value="UniProtKB-KW"/>
</dbReference>
<dbReference type="GO" id="GO:0050912">
    <property type="term" value="P:detection of chemical stimulus involved in sensory perception of taste"/>
    <property type="evidence" value="ECO:0007669"/>
    <property type="project" value="UniProtKB-ARBA"/>
</dbReference>
<dbReference type="CDD" id="cd15018">
    <property type="entry name" value="7tm_TAS2R41-like"/>
    <property type="match status" value="1"/>
</dbReference>
<dbReference type="FunFam" id="1.20.1070.10:FF:000055">
    <property type="entry name" value="Taste receptor type 2"/>
    <property type="match status" value="1"/>
</dbReference>
<dbReference type="Gene3D" id="1.20.1070.10">
    <property type="entry name" value="Rhodopsin 7-helix transmembrane proteins"/>
    <property type="match status" value="1"/>
</dbReference>
<dbReference type="InterPro" id="IPR007960">
    <property type="entry name" value="TAS2R"/>
</dbReference>
<dbReference type="PANTHER" id="PTHR11394">
    <property type="entry name" value="TASTE RECEPTOR TYPE 2"/>
    <property type="match status" value="1"/>
</dbReference>
<dbReference type="PANTHER" id="PTHR11394:SF32">
    <property type="entry name" value="TASTE RECEPTOR TYPE 2 MEMBER 60"/>
    <property type="match status" value="1"/>
</dbReference>
<dbReference type="Pfam" id="PF05296">
    <property type="entry name" value="TAS2R"/>
    <property type="match status" value="1"/>
</dbReference>
<dbReference type="SUPFAM" id="SSF81321">
    <property type="entry name" value="Family A G protein-coupled receptor-like"/>
    <property type="match status" value="1"/>
</dbReference>
<name>TR135_RAT</name>
<sequence length="321" mass="36491">MGPIMSTGETSTAHTVLGCQITDKTVITLFVILVFSCLVAVVGNGFIIIALGMKWLLRRTLSAHNKLLISLAASRFCLQCVVIGKNIYVFLNPSSFPYNPVIQLLNLMWDFLTAATIWFCSLLGFFYCVKIATLTHPVFVWLKYRLPGWVPWMLLSAVGMSSLTSILCFIGNHMIYQNYARRGHQPWNATGNSLRHSLEKFYFISIKIIMWTVPTVIFSIFMSLLLVSLVRHMKKTLLALSELRDVWAQAHFKALLPLLSFIILFISCFLTLVLSSASSTPYQEFRYWMWQVVIHLCTVIHPIVILLSNPVLRVVMKRGCC</sequence>
<organism>
    <name type="scientific">Rattus norvegicus</name>
    <name type="common">Rat</name>
    <dbReference type="NCBI Taxonomy" id="10116"/>
    <lineage>
        <taxon>Eukaryota</taxon>
        <taxon>Metazoa</taxon>
        <taxon>Chordata</taxon>
        <taxon>Craniata</taxon>
        <taxon>Vertebrata</taxon>
        <taxon>Euteleostomi</taxon>
        <taxon>Mammalia</taxon>
        <taxon>Eutheria</taxon>
        <taxon>Euarchontoglires</taxon>
        <taxon>Glires</taxon>
        <taxon>Rodentia</taxon>
        <taxon>Myomorpha</taxon>
        <taxon>Muroidea</taxon>
        <taxon>Muridae</taxon>
        <taxon>Murinae</taxon>
        <taxon>Rattus</taxon>
    </lineage>
</organism>
<protein>
    <recommendedName>
        <fullName>Taste receptor type 2 member 135</fullName>
        <shortName>T2R135</shortName>
        <shortName>T2R35</shortName>
    </recommendedName>
    <alternativeName>
        <fullName>Taste receptor type 2 member 28</fullName>
        <shortName>T2R28</shortName>
    </alternativeName>
</protein>
<evidence type="ECO:0000250" key="1">
    <source>
        <dbReference type="UniProtKB" id="Q7TQA9"/>
    </source>
</evidence>
<evidence type="ECO:0000255" key="2"/>
<evidence type="ECO:0000305" key="3"/>
<evidence type="ECO:0000312" key="4">
    <source>
        <dbReference type="EMBL" id="AAR13357.1"/>
    </source>
</evidence>
<feature type="chain" id="PRO_0000247662" description="Taste receptor type 2 member 135">
    <location>
        <begin position="1"/>
        <end position="321"/>
    </location>
</feature>
<feature type="topological domain" description="Extracellular" evidence="2">
    <location>
        <begin position="1"/>
        <end position="28"/>
    </location>
</feature>
<feature type="transmembrane region" description="Helical; Name=1" evidence="2">
    <location>
        <begin position="29"/>
        <end position="49"/>
    </location>
</feature>
<feature type="topological domain" description="Cytoplasmic" evidence="2">
    <location>
        <begin position="50"/>
        <end position="75"/>
    </location>
</feature>
<feature type="transmembrane region" description="Helical; Name=2" evidence="2">
    <location>
        <begin position="76"/>
        <end position="96"/>
    </location>
</feature>
<feature type="topological domain" description="Extracellular" evidence="2">
    <location>
        <begin position="97"/>
        <end position="106"/>
    </location>
</feature>
<feature type="transmembrane region" description="Helical; Name=3" evidence="2">
    <location>
        <begin position="107"/>
        <end position="127"/>
    </location>
</feature>
<feature type="topological domain" description="Cytoplasmic" evidence="2">
    <location>
        <begin position="128"/>
        <end position="149"/>
    </location>
</feature>
<feature type="transmembrane region" description="Helical; Name=4" evidence="2">
    <location>
        <begin position="150"/>
        <end position="170"/>
    </location>
</feature>
<feature type="topological domain" description="Extracellular" evidence="2">
    <location>
        <begin position="171"/>
        <end position="207"/>
    </location>
</feature>
<feature type="transmembrane region" description="Helical; Name=5" evidence="2">
    <location>
        <begin position="208"/>
        <end position="228"/>
    </location>
</feature>
<feature type="topological domain" description="Cytoplasmic" evidence="2">
    <location>
        <begin position="229"/>
        <end position="253"/>
    </location>
</feature>
<feature type="transmembrane region" description="Helical; Name=6" evidence="2">
    <location>
        <begin position="254"/>
        <end position="274"/>
    </location>
</feature>
<feature type="topological domain" description="Extracellular" evidence="2">
    <location>
        <begin position="275"/>
        <end position="286"/>
    </location>
</feature>
<feature type="transmembrane region" description="Helical; Name=7" evidence="2">
    <location>
        <begin position="287"/>
        <end position="307"/>
    </location>
</feature>
<feature type="topological domain" description="Cytoplasmic" evidence="2">
    <location>
        <begin position="308"/>
        <end position="321"/>
    </location>
</feature>
<feature type="glycosylation site" description="N-linked (GlcNAc...) asparagine" evidence="2">
    <location>
        <position position="188"/>
    </location>
</feature>
<comment type="function">
    <text evidence="3">Putative taste receptor which may play a role in the perception of bitterness.</text>
</comment>
<comment type="subcellular location">
    <subcellularLocation>
        <location evidence="3">Membrane</location>
        <topology evidence="3">Multi-pass membrane protein</topology>
    </subcellularLocation>
</comment>
<comment type="miscellaneous">
    <text evidence="3">Several bitter taste receptors are expressed in a single taste receptor cell.</text>
</comment>
<comment type="similarity">
    <text evidence="2">Belongs to the G-protein coupled receptor T2R family.</text>
</comment>
<accession>Q67ES2</accession>
<gene>
    <name evidence="1" type="primary">Tas2r135</name>
    <name type="synonym">Tas2r28</name>
</gene>
<keyword id="KW-0297">G-protein coupled receptor</keyword>
<keyword id="KW-0325">Glycoprotein</keyword>
<keyword id="KW-0472">Membrane</keyword>
<keyword id="KW-0675">Receptor</keyword>
<keyword id="KW-1185">Reference proteome</keyword>
<keyword id="KW-0716">Sensory transduction</keyword>
<keyword id="KW-0919">Taste</keyword>
<keyword id="KW-0807">Transducer</keyword>
<keyword id="KW-0812">Transmembrane</keyword>
<keyword id="KW-1133">Transmembrane helix</keyword>